<name>ACPS_CAMJE</name>
<proteinExistence type="inferred from homology"/>
<protein>
    <recommendedName>
        <fullName evidence="1">Holo-[acyl-carrier-protein] synthase</fullName>
        <shortName evidence="1">Holo-ACP synthase</shortName>
        <ecNumber evidence="1">2.7.8.7</ecNumber>
    </recommendedName>
    <alternativeName>
        <fullName evidence="1">4'-phosphopantetheinyl transferase AcpS</fullName>
    </alternativeName>
</protein>
<comment type="function">
    <text evidence="1">Transfers the 4'-phosphopantetheine moiety from coenzyme A to a Ser of acyl-carrier-protein.</text>
</comment>
<comment type="catalytic activity">
    <reaction evidence="1">
        <text>apo-[ACP] + CoA = holo-[ACP] + adenosine 3',5'-bisphosphate + H(+)</text>
        <dbReference type="Rhea" id="RHEA:12068"/>
        <dbReference type="Rhea" id="RHEA-COMP:9685"/>
        <dbReference type="Rhea" id="RHEA-COMP:9690"/>
        <dbReference type="ChEBI" id="CHEBI:15378"/>
        <dbReference type="ChEBI" id="CHEBI:29999"/>
        <dbReference type="ChEBI" id="CHEBI:57287"/>
        <dbReference type="ChEBI" id="CHEBI:58343"/>
        <dbReference type="ChEBI" id="CHEBI:64479"/>
        <dbReference type="EC" id="2.7.8.7"/>
    </reaction>
</comment>
<comment type="cofactor">
    <cofactor evidence="1">
        <name>Mg(2+)</name>
        <dbReference type="ChEBI" id="CHEBI:18420"/>
    </cofactor>
</comment>
<comment type="subcellular location">
    <subcellularLocation>
        <location evidence="1">Cytoplasm</location>
    </subcellularLocation>
</comment>
<comment type="similarity">
    <text evidence="1">Belongs to the P-Pant transferase superfamily. AcpS family.</text>
</comment>
<sequence length="115" mass="12658">MRVGCDIIAISRIEKIHSRHGKNFLDKFLNPKEQILIKNPATLAGLWAAKEAASKALGVGICELCSFFDIEISKDEKNAPKLKYSQKITKDFNITQTSLSISHDNGFAIAIVAVV</sequence>
<evidence type="ECO:0000255" key="1">
    <source>
        <dbReference type="HAMAP-Rule" id="MF_00101"/>
    </source>
</evidence>
<accession>Q9PMP8</accession>
<accession>Q0P8K5</accession>
<gene>
    <name evidence="1" type="primary">acpS</name>
    <name type="ordered locus">Cj1409</name>
</gene>
<dbReference type="EC" id="2.7.8.7" evidence="1"/>
<dbReference type="EMBL" id="AL111168">
    <property type="protein sequence ID" value="CAL35518.1"/>
    <property type="molecule type" value="Genomic_DNA"/>
</dbReference>
<dbReference type="PIR" id="A81286">
    <property type="entry name" value="A81286"/>
</dbReference>
<dbReference type="RefSeq" id="WP_002857939.1">
    <property type="nucleotide sequence ID" value="NZ_SZUC01000003.1"/>
</dbReference>
<dbReference type="RefSeq" id="YP_002344792.1">
    <property type="nucleotide sequence ID" value="NC_002163.1"/>
</dbReference>
<dbReference type="SMR" id="Q9PMP8"/>
<dbReference type="STRING" id="192222.Cj1409"/>
<dbReference type="PaxDb" id="192222-Cj1409"/>
<dbReference type="EnsemblBacteria" id="CAL35518">
    <property type="protein sequence ID" value="CAL35518"/>
    <property type="gene ID" value="Cj1409"/>
</dbReference>
<dbReference type="GeneID" id="905698"/>
<dbReference type="KEGG" id="cje:Cj1409"/>
<dbReference type="PATRIC" id="fig|192222.6.peg.1390"/>
<dbReference type="eggNOG" id="COG0736">
    <property type="taxonomic scope" value="Bacteria"/>
</dbReference>
<dbReference type="HOGENOM" id="CLU_089696_0_2_7"/>
<dbReference type="OrthoDB" id="517356at2"/>
<dbReference type="Proteomes" id="UP000000799">
    <property type="component" value="Chromosome"/>
</dbReference>
<dbReference type="GO" id="GO:0005737">
    <property type="term" value="C:cytoplasm"/>
    <property type="evidence" value="ECO:0007669"/>
    <property type="project" value="UniProtKB-SubCell"/>
</dbReference>
<dbReference type="GO" id="GO:0008897">
    <property type="term" value="F:holo-[acyl-carrier-protein] synthase activity"/>
    <property type="evidence" value="ECO:0007669"/>
    <property type="project" value="UniProtKB-UniRule"/>
</dbReference>
<dbReference type="GO" id="GO:0000287">
    <property type="term" value="F:magnesium ion binding"/>
    <property type="evidence" value="ECO:0007669"/>
    <property type="project" value="UniProtKB-UniRule"/>
</dbReference>
<dbReference type="GO" id="GO:0006633">
    <property type="term" value="P:fatty acid biosynthetic process"/>
    <property type="evidence" value="ECO:0007669"/>
    <property type="project" value="UniProtKB-UniRule"/>
</dbReference>
<dbReference type="Gene3D" id="3.90.470.20">
    <property type="entry name" value="4'-phosphopantetheinyl transferase domain"/>
    <property type="match status" value="1"/>
</dbReference>
<dbReference type="HAMAP" id="MF_00101">
    <property type="entry name" value="AcpS"/>
    <property type="match status" value="1"/>
</dbReference>
<dbReference type="InterPro" id="IPR008278">
    <property type="entry name" value="4-PPantetheinyl_Trfase_dom"/>
</dbReference>
<dbReference type="InterPro" id="IPR037143">
    <property type="entry name" value="4-PPantetheinyl_Trfase_dom_sf"/>
</dbReference>
<dbReference type="InterPro" id="IPR002582">
    <property type="entry name" value="ACPS"/>
</dbReference>
<dbReference type="InterPro" id="IPR004568">
    <property type="entry name" value="Ppantetheine-prot_Trfase_dom"/>
</dbReference>
<dbReference type="NCBIfam" id="TIGR00516">
    <property type="entry name" value="acpS"/>
    <property type="match status" value="1"/>
</dbReference>
<dbReference type="NCBIfam" id="TIGR00556">
    <property type="entry name" value="pantethn_trn"/>
    <property type="match status" value="1"/>
</dbReference>
<dbReference type="Pfam" id="PF01648">
    <property type="entry name" value="ACPS"/>
    <property type="match status" value="1"/>
</dbReference>
<dbReference type="SUPFAM" id="SSF56214">
    <property type="entry name" value="4'-phosphopantetheinyl transferase"/>
    <property type="match status" value="1"/>
</dbReference>
<feature type="chain" id="PRO_0000175626" description="Holo-[acyl-carrier-protein] synthase">
    <location>
        <begin position="1"/>
        <end position="115"/>
    </location>
</feature>
<feature type="binding site" evidence="1">
    <location>
        <position position="6"/>
    </location>
    <ligand>
        <name>Mg(2+)</name>
        <dbReference type="ChEBI" id="CHEBI:18420"/>
    </ligand>
</feature>
<feature type="binding site" evidence="1">
    <location>
        <position position="51"/>
    </location>
    <ligand>
        <name>Mg(2+)</name>
        <dbReference type="ChEBI" id="CHEBI:18420"/>
    </ligand>
</feature>
<organism>
    <name type="scientific">Campylobacter jejuni subsp. jejuni serotype O:2 (strain ATCC 700819 / NCTC 11168)</name>
    <dbReference type="NCBI Taxonomy" id="192222"/>
    <lineage>
        <taxon>Bacteria</taxon>
        <taxon>Pseudomonadati</taxon>
        <taxon>Campylobacterota</taxon>
        <taxon>Epsilonproteobacteria</taxon>
        <taxon>Campylobacterales</taxon>
        <taxon>Campylobacteraceae</taxon>
        <taxon>Campylobacter</taxon>
    </lineage>
</organism>
<keyword id="KW-0963">Cytoplasm</keyword>
<keyword id="KW-0275">Fatty acid biosynthesis</keyword>
<keyword id="KW-0276">Fatty acid metabolism</keyword>
<keyword id="KW-0444">Lipid biosynthesis</keyword>
<keyword id="KW-0443">Lipid metabolism</keyword>
<keyword id="KW-0460">Magnesium</keyword>
<keyword id="KW-0479">Metal-binding</keyword>
<keyword id="KW-1185">Reference proteome</keyword>
<keyword id="KW-0808">Transferase</keyword>
<reference key="1">
    <citation type="journal article" date="2000" name="Nature">
        <title>The genome sequence of the food-borne pathogen Campylobacter jejuni reveals hypervariable sequences.</title>
        <authorList>
            <person name="Parkhill J."/>
            <person name="Wren B.W."/>
            <person name="Mungall K.L."/>
            <person name="Ketley J.M."/>
            <person name="Churcher C.M."/>
            <person name="Basham D."/>
            <person name="Chillingworth T."/>
            <person name="Davies R.M."/>
            <person name="Feltwell T."/>
            <person name="Holroyd S."/>
            <person name="Jagels K."/>
            <person name="Karlyshev A.V."/>
            <person name="Moule S."/>
            <person name="Pallen M.J."/>
            <person name="Penn C.W."/>
            <person name="Quail M.A."/>
            <person name="Rajandream M.A."/>
            <person name="Rutherford K.M."/>
            <person name="van Vliet A.H.M."/>
            <person name="Whitehead S."/>
            <person name="Barrell B.G."/>
        </authorList>
    </citation>
    <scope>NUCLEOTIDE SEQUENCE [LARGE SCALE GENOMIC DNA]</scope>
    <source>
        <strain>ATCC 700819 / NCTC 11168</strain>
    </source>
</reference>